<protein>
    <recommendedName>
        <fullName evidence="4">Probable FAD-binding monooxygenase ltbD</fullName>
        <ecNumber evidence="3">1.14.13.-</ecNumber>
    </recommendedName>
    <alternativeName>
        <fullName evidence="4">Luteodienoside A biosynthesis cluster protein D</fullName>
    </alternativeName>
</protein>
<name>LTBD_ASPLT</name>
<dbReference type="EC" id="1.14.13.-" evidence="3"/>
<dbReference type="EMBL" id="OR597289">
    <property type="protein sequence ID" value="WWQ80776.1"/>
    <property type="molecule type" value="Genomic_DNA"/>
</dbReference>
<dbReference type="GO" id="GO:0004497">
    <property type="term" value="F:monooxygenase activity"/>
    <property type="evidence" value="ECO:0007669"/>
    <property type="project" value="UniProtKB-KW"/>
</dbReference>
<dbReference type="Gene3D" id="3.50.50.60">
    <property type="entry name" value="FAD/NAD(P)-binding domain"/>
    <property type="match status" value="1"/>
</dbReference>
<dbReference type="Gene3D" id="3.40.50.300">
    <property type="entry name" value="P-loop containing nucleotide triphosphate hydrolases"/>
    <property type="match status" value="1"/>
</dbReference>
<dbReference type="InterPro" id="IPR051209">
    <property type="entry name" value="FAD-bind_Monooxygenase_sf"/>
</dbReference>
<dbReference type="InterPro" id="IPR036188">
    <property type="entry name" value="FAD/NAD-bd_sf"/>
</dbReference>
<dbReference type="InterPro" id="IPR027417">
    <property type="entry name" value="P-loop_NTPase"/>
</dbReference>
<dbReference type="PANTHER" id="PTHR42877">
    <property type="entry name" value="L-ORNITHINE N(5)-MONOOXYGENASE-RELATED"/>
    <property type="match status" value="1"/>
</dbReference>
<dbReference type="PANTHER" id="PTHR42877:SF8">
    <property type="entry name" value="MONOOXYGENASE"/>
    <property type="match status" value="1"/>
</dbReference>
<gene>
    <name evidence="4" type="primary">ltbD</name>
</gene>
<keyword id="KW-0274">FAD</keyword>
<keyword id="KW-0285">Flavoprotein</keyword>
<keyword id="KW-0503">Monooxygenase</keyword>
<keyword id="KW-0560">Oxidoreductase</keyword>
<proteinExistence type="inferred from homology"/>
<evidence type="ECO:0000250" key="1">
    <source>
        <dbReference type="UniProtKB" id="H3JQW0"/>
    </source>
</evidence>
<evidence type="ECO:0000256" key="2">
    <source>
        <dbReference type="SAM" id="MobiDB-lite"/>
    </source>
</evidence>
<evidence type="ECO:0000269" key="3">
    <source>
    </source>
</evidence>
<evidence type="ECO:0000303" key="4">
    <source>
    </source>
</evidence>
<evidence type="ECO:0000305" key="5"/>
<comment type="function">
    <text evidence="3">Probable FAD-binding monooxygenase; part of the gene cluster that mediates the biosynthesis of luteodienoside A, a glycosylated polyketide consisting of an unusual 1-O-beta-D-glucopyranosyl-myo-inositol (glucinol) ester of 3-hydroxy-2,2,4-trimethylocta-4,6-dienoic acid (PubMed:38425541). The HR-PKS ltbA produces the trimethylated polyketide chain from acetyl-CoA, malonyl-CoA and S-adenosylmethionine (SAM), and the ltbA cAT domain then uses glucinol produced by the glycosyltransferase ltbB as an offloading substrate to release luteodienoside A (PubMed:38425541). Since ltbA and ltbB are sufficient for the biosynthesis of luteodienoside A, the functions of the methyltransferase ltbC and the FAD-binding monooxygenase ltbD within the pathway remain obscur (PubMed:38425541).</text>
</comment>
<comment type="cofactor">
    <cofactor evidence="1">
        <name>FAD</name>
        <dbReference type="ChEBI" id="CHEBI:57692"/>
    </cofactor>
    <text evidence="1">Binds 1 FAD per subunit.</text>
</comment>
<comment type="subunit">
    <text evidence="1">Homodimer.</text>
</comment>
<comment type="similarity">
    <text evidence="5">Belongs to the FAD-binding monooxygenase family.</text>
</comment>
<sequence>MNETEYFVVDTPGFEDEGGAWATFCEIAQLLDHIREHAVIVAIFFVTPINIFKRRPDPFEEKLYTWLREMSGERFMKYVTFVTTFWEAHNPDQLERYNDFLVRRKEQEWARFIKHGAQTYQFGKVYSAGVETTLHWDTDAEQLAAQAREMIRVYCHEIPIIQPLILHELNMNMGLGSTAAGQVLWPAGDGGTNDQGPSRAQSTASSGGSGRPRSTESPQSGAQASTTPTSPPTTQSTGDDPAAPGGWAWFREFAWEITKRYGPQIVEHVINRQFGSAGAIIGGNGGDFASSMQCMSAKGFDINSVTDTAKFFGKASDMGSRGPNGPIGNGPIIFSIKLQGSYFAQFLNRWQNEDIQAFDPKVDAVNDFMEQKDLFMETTVWNTHCQSWYKSRQTGKITALWPGSTLHYMETLAKPRYDDFDITYASKNRFAYLGNGFSQDELNPQADITYYIRDKDDGLSVFGNLFSTYNAKDIGDKMTALADRAI</sequence>
<feature type="chain" id="PRO_0000461481" description="Probable FAD-binding monooxygenase ltbD">
    <location>
        <begin position="1"/>
        <end position="486"/>
    </location>
</feature>
<feature type="region of interest" description="Disordered" evidence="2">
    <location>
        <begin position="186"/>
        <end position="243"/>
    </location>
</feature>
<feature type="compositionally biased region" description="Polar residues" evidence="2">
    <location>
        <begin position="194"/>
        <end position="206"/>
    </location>
</feature>
<feature type="compositionally biased region" description="Low complexity" evidence="2">
    <location>
        <begin position="220"/>
        <end position="241"/>
    </location>
</feature>
<accession>P9WEH8</accession>
<reference key="1">
    <citation type="journal article" date="2024" name="Chem. Sci.">
        <title>Discovery and heterologous biosynthesis of glycosylated polyketide luteodienoside A reveals unprecedented glucinol-mediated product offloading by a fungal carnitine O-acyltransferase domain.</title>
        <authorList>
            <person name="Arishi A.A."/>
            <person name="Shang Z."/>
            <person name="Lacey E."/>
            <person name="Crombie A."/>
            <person name="Vuong D."/>
            <person name="Li H."/>
            <person name="Bracegirdle J."/>
            <person name="Turner P."/>
            <person name="Lewis W."/>
            <person name="Flematti G.R."/>
            <person name="Piggott A.M."/>
            <person name="Chooi Y.H."/>
        </authorList>
    </citation>
    <scope>NUCLEOTIDE SEQUENCE [GENOMIC DNA]</scope>
    <scope>FUNCTION</scope>
    <source>
        <strain>CBS 146723 / FRR 5427 / MST FP 2246</strain>
    </source>
</reference>
<organism>
    <name type="scientific">Aspergillus luteorubrus</name>
    <dbReference type="NCBI Taxonomy" id="2715282"/>
    <lineage>
        <taxon>Eukaryota</taxon>
        <taxon>Fungi</taxon>
        <taxon>Dikarya</taxon>
        <taxon>Ascomycota</taxon>
        <taxon>Pezizomycotina</taxon>
        <taxon>Eurotiomycetes</taxon>
        <taxon>Eurotiomycetidae</taxon>
        <taxon>Eurotiales</taxon>
        <taxon>Aspergillaceae</taxon>
        <taxon>Aspergillus</taxon>
    </lineage>
</organism>